<dbReference type="EMBL" id="CP001184">
    <property type="protein sequence ID" value="ACI60318.1"/>
    <property type="molecule type" value="Genomic_DNA"/>
</dbReference>
<dbReference type="RefSeq" id="WP_004025839.1">
    <property type="nucleotide sequence ID" value="NC_011374.1"/>
</dbReference>
<dbReference type="SMR" id="B5ZBD0"/>
<dbReference type="STRING" id="565575.UUR10_0327"/>
<dbReference type="GeneID" id="93848804"/>
<dbReference type="KEGG" id="uue:UUR10_0327"/>
<dbReference type="eggNOG" id="COG0858">
    <property type="taxonomic scope" value="Bacteria"/>
</dbReference>
<dbReference type="HOGENOM" id="CLU_089475_3_2_14"/>
<dbReference type="OrthoDB" id="384689at2"/>
<dbReference type="Proteomes" id="UP000002018">
    <property type="component" value="Chromosome"/>
</dbReference>
<dbReference type="GO" id="GO:0005829">
    <property type="term" value="C:cytosol"/>
    <property type="evidence" value="ECO:0007669"/>
    <property type="project" value="TreeGrafter"/>
</dbReference>
<dbReference type="GO" id="GO:0043024">
    <property type="term" value="F:ribosomal small subunit binding"/>
    <property type="evidence" value="ECO:0007669"/>
    <property type="project" value="TreeGrafter"/>
</dbReference>
<dbReference type="GO" id="GO:0030490">
    <property type="term" value="P:maturation of SSU-rRNA"/>
    <property type="evidence" value="ECO:0007669"/>
    <property type="project" value="UniProtKB-UniRule"/>
</dbReference>
<dbReference type="Gene3D" id="3.30.300.20">
    <property type="match status" value="1"/>
</dbReference>
<dbReference type="HAMAP" id="MF_00003">
    <property type="entry name" value="RbfA"/>
    <property type="match status" value="1"/>
</dbReference>
<dbReference type="InterPro" id="IPR015946">
    <property type="entry name" value="KH_dom-like_a/b"/>
</dbReference>
<dbReference type="InterPro" id="IPR000238">
    <property type="entry name" value="RbfA"/>
</dbReference>
<dbReference type="InterPro" id="IPR023799">
    <property type="entry name" value="RbfA_dom_sf"/>
</dbReference>
<dbReference type="NCBIfam" id="TIGR00082">
    <property type="entry name" value="rbfA"/>
    <property type="match status" value="1"/>
</dbReference>
<dbReference type="PANTHER" id="PTHR33515">
    <property type="entry name" value="RIBOSOME-BINDING FACTOR A, CHLOROPLASTIC-RELATED"/>
    <property type="match status" value="1"/>
</dbReference>
<dbReference type="PANTHER" id="PTHR33515:SF1">
    <property type="entry name" value="RIBOSOME-BINDING FACTOR A, CHLOROPLASTIC-RELATED"/>
    <property type="match status" value="1"/>
</dbReference>
<dbReference type="Pfam" id="PF02033">
    <property type="entry name" value="RBFA"/>
    <property type="match status" value="1"/>
</dbReference>
<dbReference type="SUPFAM" id="SSF89919">
    <property type="entry name" value="Ribosome-binding factor A, RbfA"/>
    <property type="match status" value="1"/>
</dbReference>
<keyword id="KW-0963">Cytoplasm</keyword>
<keyword id="KW-0690">Ribosome biogenesis</keyword>
<protein>
    <recommendedName>
        <fullName evidence="1">Ribosome-binding factor A</fullName>
    </recommendedName>
</protein>
<feature type="chain" id="PRO_1000088942" description="Ribosome-binding factor A">
    <location>
        <begin position="1"/>
        <end position="116"/>
    </location>
</feature>
<comment type="function">
    <text evidence="1">One of several proteins that assist in the late maturation steps of the functional core of the 30S ribosomal subunit. Associates with free 30S ribosomal subunits (but not with 30S subunits that are part of 70S ribosomes or polysomes). Required for efficient processing of 16S rRNA. May interact with the 5'-terminal helix region of 16S rRNA.</text>
</comment>
<comment type="subunit">
    <text evidence="1">Monomer. Binds 30S ribosomal subunits, but not 50S ribosomal subunits or 70S ribosomes.</text>
</comment>
<comment type="subcellular location">
    <subcellularLocation>
        <location evidence="1">Cytoplasm</location>
    </subcellularLocation>
</comment>
<comment type="similarity">
    <text evidence="1">Belongs to the RbfA family.</text>
</comment>
<gene>
    <name evidence="1" type="primary">rbfA</name>
    <name type="ordered locus">UUR10_0327</name>
</gene>
<evidence type="ECO:0000255" key="1">
    <source>
        <dbReference type="HAMAP-Rule" id="MF_00003"/>
    </source>
</evidence>
<reference key="1">
    <citation type="submission" date="2008-10" db="EMBL/GenBank/DDBJ databases">
        <title>Genome sequence of Ureaplasma urealyticum serovar 10 ATCC-33699.</title>
        <authorList>
            <person name="Shrivastava S."/>
            <person name="Methe B.A."/>
            <person name="Glass J."/>
            <person name="White K."/>
            <person name="Duffy L.B."/>
        </authorList>
    </citation>
    <scope>NUCLEOTIDE SEQUENCE [LARGE SCALE GENOMIC DNA]</scope>
    <source>
        <strain>ATCC 33699 / Western</strain>
    </source>
</reference>
<organism>
    <name type="scientific">Ureaplasma urealyticum serovar 10 (strain ATCC 33699 / Western)</name>
    <dbReference type="NCBI Taxonomy" id="565575"/>
    <lineage>
        <taxon>Bacteria</taxon>
        <taxon>Bacillati</taxon>
        <taxon>Mycoplasmatota</taxon>
        <taxon>Mycoplasmoidales</taxon>
        <taxon>Mycoplasmoidaceae</taxon>
        <taxon>Ureaplasma</taxon>
    </lineage>
</organism>
<proteinExistence type="inferred from homology"/>
<name>RBFA_UREU1</name>
<sequence length="116" mass="13231">MANEVRVARLESLIKDVINNALANEINDKIAKLARVTAVRLSNDLSVAKIFLDAHKRESMPKVLENVNKVSGLLRSKLAAEWTSYKVPELRFVIDETIDYANHIDELFKKIKQQEN</sequence>
<accession>B5ZBD0</accession>